<evidence type="ECO:0000255" key="1">
    <source>
        <dbReference type="HAMAP-Rule" id="MF_00110"/>
    </source>
</evidence>
<feature type="chain" id="PRO_1000094547" description="3-dehydroquinate synthase">
    <location>
        <begin position="1"/>
        <end position="359"/>
    </location>
</feature>
<feature type="binding site" evidence="1">
    <location>
        <begin position="70"/>
        <end position="75"/>
    </location>
    <ligand>
        <name>NAD(+)</name>
        <dbReference type="ChEBI" id="CHEBI:57540"/>
    </ligand>
</feature>
<feature type="binding site" evidence="1">
    <location>
        <begin position="104"/>
        <end position="108"/>
    </location>
    <ligand>
        <name>NAD(+)</name>
        <dbReference type="ChEBI" id="CHEBI:57540"/>
    </ligand>
</feature>
<feature type="binding site" evidence="1">
    <location>
        <begin position="128"/>
        <end position="129"/>
    </location>
    <ligand>
        <name>NAD(+)</name>
        <dbReference type="ChEBI" id="CHEBI:57540"/>
    </ligand>
</feature>
<feature type="binding site" evidence="1">
    <location>
        <position position="141"/>
    </location>
    <ligand>
        <name>NAD(+)</name>
        <dbReference type="ChEBI" id="CHEBI:57540"/>
    </ligand>
</feature>
<feature type="binding site" evidence="1">
    <location>
        <position position="150"/>
    </location>
    <ligand>
        <name>NAD(+)</name>
        <dbReference type="ChEBI" id="CHEBI:57540"/>
    </ligand>
</feature>
<feature type="binding site" evidence="1">
    <location>
        <position position="183"/>
    </location>
    <ligand>
        <name>Zn(2+)</name>
        <dbReference type="ChEBI" id="CHEBI:29105"/>
    </ligand>
</feature>
<feature type="binding site" evidence="1">
    <location>
        <position position="246"/>
    </location>
    <ligand>
        <name>Zn(2+)</name>
        <dbReference type="ChEBI" id="CHEBI:29105"/>
    </ligand>
</feature>
<feature type="binding site" evidence="1">
    <location>
        <position position="262"/>
    </location>
    <ligand>
        <name>Zn(2+)</name>
        <dbReference type="ChEBI" id="CHEBI:29105"/>
    </ligand>
</feature>
<comment type="function">
    <text evidence="1">Catalyzes the conversion of 3-deoxy-D-arabino-heptulosonate 7-phosphate (DAHP) to dehydroquinate (DHQ).</text>
</comment>
<comment type="catalytic activity">
    <reaction evidence="1">
        <text>7-phospho-2-dehydro-3-deoxy-D-arabino-heptonate = 3-dehydroquinate + phosphate</text>
        <dbReference type="Rhea" id="RHEA:21968"/>
        <dbReference type="ChEBI" id="CHEBI:32364"/>
        <dbReference type="ChEBI" id="CHEBI:43474"/>
        <dbReference type="ChEBI" id="CHEBI:58394"/>
        <dbReference type="EC" id="4.2.3.4"/>
    </reaction>
</comment>
<comment type="cofactor">
    <cofactor evidence="1">
        <name>Co(2+)</name>
        <dbReference type="ChEBI" id="CHEBI:48828"/>
    </cofactor>
    <cofactor evidence="1">
        <name>Zn(2+)</name>
        <dbReference type="ChEBI" id="CHEBI:29105"/>
    </cofactor>
    <text evidence="1">Binds 1 divalent metal cation per subunit. Can use either Co(2+) or Zn(2+).</text>
</comment>
<comment type="cofactor">
    <cofactor evidence="1">
        <name>NAD(+)</name>
        <dbReference type="ChEBI" id="CHEBI:57540"/>
    </cofactor>
</comment>
<comment type="pathway">
    <text evidence="1">Metabolic intermediate biosynthesis; chorismate biosynthesis; chorismate from D-erythrose 4-phosphate and phosphoenolpyruvate: step 2/7.</text>
</comment>
<comment type="subcellular location">
    <subcellularLocation>
        <location evidence="1">Cytoplasm</location>
    </subcellularLocation>
</comment>
<comment type="similarity">
    <text evidence="1">Belongs to the sugar phosphate cyclases superfamily. Dehydroquinate synthase family.</text>
</comment>
<protein>
    <recommendedName>
        <fullName evidence="1">3-dehydroquinate synthase</fullName>
        <shortName evidence="1">DHQS</shortName>
        <ecNumber evidence="1">4.2.3.4</ecNumber>
    </recommendedName>
</protein>
<gene>
    <name evidence="1" type="primary">aroB</name>
    <name type="ordered locus">Mflv_3756</name>
</gene>
<name>AROB_MYCGI</name>
<proteinExistence type="inferred from homology"/>
<reference key="1">
    <citation type="submission" date="2007-04" db="EMBL/GenBank/DDBJ databases">
        <title>Complete sequence of chromosome of Mycobacterium gilvum PYR-GCK.</title>
        <authorList>
            <consortium name="US DOE Joint Genome Institute"/>
            <person name="Copeland A."/>
            <person name="Lucas S."/>
            <person name="Lapidus A."/>
            <person name="Barry K."/>
            <person name="Detter J.C."/>
            <person name="Glavina del Rio T."/>
            <person name="Hammon N."/>
            <person name="Israni S."/>
            <person name="Dalin E."/>
            <person name="Tice H."/>
            <person name="Pitluck S."/>
            <person name="Chain P."/>
            <person name="Malfatti S."/>
            <person name="Shin M."/>
            <person name="Vergez L."/>
            <person name="Schmutz J."/>
            <person name="Larimer F."/>
            <person name="Land M."/>
            <person name="Hauser L."/>
            <person name="Kyrpides N."/>
            <person name="Mikhailova N."/>
            <person name="Miller C."/>
            <person name="Richardson P."/>
        </authorList>
    </citation>
    <scope>NUCLEOTIDE SEQUENCE [LARGE SCALE GENOMIC DNA]</scope>
    <source>
        <strain>PYR-GCK</strain>
    </source>
</reference>
<accession>A4TBX8</accession>
<keyword id="KW-0028">Amino-acid biosynthesis</keyword>
<keyword id="KW-0057">Aromatic amino acid biosynthesis</keyword>
<keyword id="KW-0170">Cobalt</keyword>
<keyword id="KW-0963">Cytoplasm</keyword>
<keyword id="KW-0456">Lyase</keyword>
<keyword id="KW-0479">Metal-binding</keyword>
<keyword id="KW-0520">NAD</keyword>
<keyword id="KW-0547">Nucleotide-binding</keyword>
<keyword id="KW-0862">Zinc</keyword>
<sequence>MTEPVTVDVRTDPPYPVIIGRGLLGDLGRVLDGRHKVAILHQPTLTQTAEAIRTHLSEKGIDAHRIEIPDAEGGKELPVVGFIWQVLGRIGVGRKDAIVSLGGGAATDVAGFAAATWLRGIDIVHVPTTLLGMVDAAVGGKTGINTDAGKNLVGAFHQPAAVLIDLATLESLPRNEIVAGMAEIVKAGFIADPVILDMIEADPEAALDPSGAVLPELIRRAVVVKAEVVAADEKESQLREILNYGHTLAHAIERRERYQWRHGAAVSVGLVFAAELGRLAGRLDDDTTERHRAILTSLGLPVTYDADALPQLMESMLGDKKTRAGVLRFVVLDGLAKPGRLEGPDPSLLAAAYAEVARD</sequence>
<organism>
    <name type="scientific">Mycolicibacterium gilvum (strain PYR-GCK)</name>
    <name type="common">Mycobacterium gilvum (strain PYR-GCK)</name>
    <dbReference type="NCBI Taxonomy" id="350054"/>
    <lineage>
        <taxon>Bacteria</taxon>
        <taxon>Bacillati</taxon>
        <taxon>Actinomycetota</taxon>
        <taxon>Actinomycetes</taxon>
        <taxon>Mycobacteriales</taxon>
        <taxon>Mycobacteriaceae</taxon>
        <taxon>Mycolicibacterium</taxon>
    </lineage>
</organism>
<dbReference type="EC" id="4.2.3.4" evidence="1"/>
<dbReference type="EMBL" id="CP000656">
    <property type="protein sequence ID" value="ABP46228.1"/>
    <property type="molecule type" value="Genomic_DNA"/>
</dbReference>
<dbReference type="SMR" id="A4TBX8"/>
<dbReference type="STRING" id="350054.Mflv_3756"/>
<dbReference type="KEGG" id="mgi:Mflv_3756"/>
<dbReference type="eggNOG" id="COG0337">
    <property type="taxonomic scope" value="Bacteria"/>
</dbReference>
<dbReference type="HOGENOM" id="CLU_001201_0_3_11"/>
<dbReference type="OrthoDB" id="9806583at2"/>
<dbReference type="UniPathway" id="UPA00053">
    <property type="reaction ID" value="UER00085"/>
</dbReference>
<dbReference type="GO" id="GO:0005737">
    <property type="term" value="C:cytoplasm"/>
    <property type="evidence" value="ECO:0007669"/>
    <property type="project" value="UniProtKB-SubCell"/>
</dbReference>
<dbReference type="GO" id="GO:0003856">
    <property type="term" value="F:3-dehydroquinate synthase activity"/>
    <property type="evidence" value="ECO:0007669"/>
    <property type="project" value="UniProtKB-UniRule"/>
</dbReference>
<dbReference type="GO" id="GO:0046872">
    <property type="term" value="F:metal ion binding"/>
    <property type="evidence" value="ECO:0007669"/>
    <property type="project" value="UniProtKB-KW"/>
</dbReference>
<dbReference type="GO" id="GO:0000166">
    <property type="term" value="F:nucleotide binding"/>
    <property type="evidence" value="ECO:0007669"/>
    <property type="project" value="UniProtKB-KW"/>
</dbReference>
<dbReference type="GO" id="GO:0008652">
    <property type="term" value="P:amino acid biosynthetic process"/>
    <property type="evidence" value="ECO:0007669"/>
    <property type="project" value="UniProtKB-KW"/>
</dbReference>
<dbReference type="GO" id="GO:0009073">
    <property type="term" value="P:aromatic amino acid family biosynthetic process"/>
    <property type="evidence" value="ECO:0007669"/>
    <property type="project" value="UniProtKB-KW"/>
</dbReference>
<dbReference type="GO" id="GO:0009423">
    <property type="term" value="P:chorismate biosynthetic process"/>
    <property type="evidence" value="ECO:0007669"/>
    <property type="project" value="UniProtKB-UniRule"/>
</dbReference>
<dbReference type="CDD" id="cd08195">
    <property type="entry name" value="DHQS"/>
    <property type="match status" value="1"/>
</dbReference>
<dbReference type="FunFam" id="3.40.50.1970:FF:000012">
    <property type="entry name" value="3-dehydroquinate synthase"/>
    <property type="match status" value="1"/>
</dbReference>
<dbReference type="Gene3D" id="3.40.50.1970">
    <property type="match status" value="1"/>
</dbReference>
<dbReference type="Gene3D" id="1.20.1090.10">
    <property type="entry name" value="Dehydroquinate synthase-like - alpha domain"/>
    <property type="match status" value="1"/>
</dbReference>
<dbReference type="HAMAP" id="MF_00110">
    <property type="entry name" value="DHQ_synthase"/>
    <property type="match status" value="1"/>
</dbReference>
<dbReference type="InterPro" id="IPR050071">
    <property type="entry name" value="Dehydroquinate_synthase"/>
</dbReference>
<dbReference type="InterPro" id="IPR016037">
    <property type="entry name" value="DHQ_synth_AroB"/>
</dbReference>
<dbReference type="InterPro" id="IPR030963">
    <property type="entry name" value="DHQ_synth_fam"/>
</dbReference>
<dbReference type="InterPro" id="IPR030960">
    <property type="entry name" value="DHQS/DOIS_N"/>
</dbReference>
<dbReference type="InterPro" id="IPR056179">
    <property type="entry name" value="DHQS_C"/>
</dbReference>
<dbReference type="NCBIfam" id="TIGR01357">
    <property type="entry name" value="aroB"/>
    <property type="match status" value="1"/>
</dbReference>
<dbReference type="PANTHER" id="PTHR43622">
    <property type="entry name" value="3-DEHYDROQUINATE SYNTHASE"/>
    <property type="match status" value="1"/>
</dbReference>
<dbReference type="PANTHER" id="PTHR43622:SF7">
    <property type="entry name" value="3-DEHYDROQUINATE SYNTHASE, CHLOROPLASTIC"/>
    <property type="match status" value="1"/>
</dbReference>
<dbReference type="Pfam" id="PF01761">
    <property type="entry name" value="DHQ_synthase"/>
    <property type="match status" value="1"/>
</dbReference>
<dbReference type="Pfam" id="PF24621">
    <property type="entry name" value="DHQS_C"/>
    <property type="match status" value="1"/>
</dbReference>
<dbReference type="PIRSF" id="PIRSF001455">
    <property type="entry name" value="DHQ_synth"/>
    <property type="match status" value="1"/>
</dbReference>
<dbReference type="SUPFAM" id="SSF56796">
    <property type="entry name" value="Dehydroquinate synthase-like"/>
    <property type="match status" value="1"/>
</dbReference>